<protein>
    <recommendedName>
        <fullName>Eukaryotic translation initiation factor 5</fullName>
        <shortName>eIF-5</shortName>
    </recommendedName>
</protein>
<evidence type="ECO:0000255" key="1"/>
<evidence type="ECO:0000255" key="2">
    <source>
        <dbReference type="PROSITE-ProRule" id="PRU00695"/>
    </source>
</evidence>
<evidence type="ECO:0000256" key="3">
    <source>
        <dbReference type="SAM" id="MobiDB-lite"/>
    </source>
</evidence>
<evidence type="ECO:0000269" key="4">
    <source>
    </source>
</evidence>
<evidence type="ECO:0000269" key="5">
    <source>
    </source>
</evidence>
<evidence type="ECO:0000269" key="6">
    <source>
    </source>
</evidence>
<evidence type="ECO:0000269" key="7">
    <source>
    </source>
</evidence>
<evidence type="ECO:0000269" key="8">
    <source>
    </source>
</evidence>
<evidence type="ECO:0000269" key="9">
    <source>
    </source>
</evidence>
<evidence type="ECO:0000305" key="10"/>
<evidence type="ECO:0007744" key="11">
    <source>
    </source>
</evidence>
<evidence type="ECO:0007744" key="12">
    <source>
    </source>
</evidence>
<evidence type="ECO:0007744" key="13">
    <source>
    </source>
</evidence>
<evidence type="ECO:0007829" key="14">
    <source>
        <dbReference type="PDB" id="2FUL"/>
    </source>
</evidence>
<evidence type="ECO:0007829" key="15">
    <source>
        <dbReference type="PDB" id="8CAS"/>
    </source>
</evidence>
<gene>
    <name type="primary">TIF5</name>
    <name type="ordered locus">YPR041W</name>
    <name type="ORF">YP3085.05</name>
</gene>
<feature type="chain" id="PRO_0000007791" description="Eukaryotic translation initiation factor 5">
    <location>
        <begin position="1"/>
        <end position="405"/>
    </location>
</feature>
<feature type="domain" description="W2" evidence="2">
    <location>
        <begin position="241"/>
        <end position="402"/>
    </location>
</feature>
<feature type="region of interest" description="Disordered" evidence="3">
    <location>
        <begin position="143"/>
        <end position="202"/>
    </location>
</feature>
<feature type="compositionally biased region" description="Polar residues" evidence="3">
    <location>
        <begin position="177"/>
        <end position="192"/>
    </location>
</feature>
<feature type="binding site" evidence="1">
    <location>
        <begin position="27"/>
        <end position="34"/>
    </location>
    <ligand>
        <name>GTP</name>
        <dbReference type="ChEBI" id="CHEBI:37565"/>
    </ligand>
</feature>
<feature type="modified residue" description="Phosphoserine" evidence="13">
    <location>
        <position position="170"/>
    </location>
</feature>
<feature type="modified residue" description="Phosphoserine" evidence="13">
    <location>
        <position position="172"/>
    </location>
</feature>
<feature type="modified residue" description="Phosphothreonine" evidence="11 13">
    <location>
        <position position="191"/>
    </location>
</feature>
<feature type="modified residue" description="Phosphoserine" evidence="12">
    <location>
        <position position="228"/>
    </location>
</feature>
<feature type="modified residue" description="Phosphothreonine" evidence="12">
    <location>
        <position position="317"/>
    </location>
</feature>
<feature type="modified residue" description="Phosphoserine" evidence="11 12 13">
    <location>
        <position position="397"/>
    </location>
</feature>
<feature type="splice variant" id="VSP_018724" description="In isoform Short." evidence="10">
    <location>
        <begin position="1"/>
        <end position="17"/>
    </location>
</feature>
<feature type="mutagenesis site" description="In TIF5-12A; Abolishes binding to SUI3 and NIP1.">
    <original>LPKILVQLYNNDIISEEEIMRF</original>
    <variation>APKAAVQAANNDAASAAEAARA</variation>
    <location>
        <begin position="343"/>
        <end position="364"/>
    </location>
</feature>
<feature type="mutagenesis site" description="In TIF5-7A; Abolishes binding to SUI3 and NIP1." evidence="4">
    <original>FITWLETAESD</original>
    <variation>AATAAETAAAA</variation>
    <location>
        <begin position="388"/>
        <end position="398"/>
    </location>
</feature>
<feature type="strand" evidence="15">
    <location>
        <begin position="13"/>
        <end position="15"/>
    </location>
</feature>
<feature type="strand" evidence="15">
    <location>
        <begin position="23"/>
        <end position="26"/>
    </location>
</feature>
<feature type="strand" evidence="15">
    <location>
        <begin position="33"/>
        <end position="38"/>
    </location>
</feature>
<feature type="helix" evidence="15">
    <location>
        <begin position="40"/>
        <end position="45"/>
    </location>
</feature>
<feature type="helix" evidence="15">
    <location>
        <begin position="50"/>
        <end position="61"/>
    </location>
</feature>
<feature type="strand" evidence="15">
    <location>
        <begin position="65"/>
        <end position="67"/>
    </location>
</feature>
<feature type="strand" evidence="15">
    <location>
        <begin position="69"/>
        <end position="72"/>
    </location>
</feature>
<feature type="strand" evidence="15">
    <location>
        <begin position="74"/>
        <end position="78"/>
    </location>
</feature>
<feature type="helix" evidence="15">
    <location>
        <begin position="82"/>
        <end position="95"/>
    </location>
</feature>
<feature type="turn" evidence="15">
    <location>
        <begin position="100"/>
        <end position="102"/>
    </location>
</feature>
<feature type="strand" evidence="15">
    <location>
        <begin position="107"/>
        <end position="111"/>
    </location>
</feature>
<feature type="strand" evidence="15">
    <location>
        <begin position="113"/>
        <end position="115"/>
    </location>
</feature>
<feature type="strand" evidence="15">
    <location>
        <begin position="117"/>
        <end position="124"/>
    </location>
</feature>
<feature type="strand" evidence="15">
    <location>
        <begin position="127"/>
        <end position="129"/>
    </location>
</feature>
<feature type="strand" evidence="15">
    <location>
        <begin position="132"/>
        <end position="134"/>
    </location>
</feature>
<feature type="helix" evidence="15">
    <location>
        <begin position="135"/>
        <end position="142"/>
    </location>
</feature>
<feature type="turn" evidence="15">
    <location>
        <begin position="145"/>
        <end position="147"/>
    </location>
</feature>
<feature type="helix" evidence="14">
    <location>
        <begin position="244"/>
        <end position="259"/>
    </location>
</feature>
<feature type="helix" evidence="14">
    <location>
        <begin position="269"/>
        <end position="278"/>
    </location>
</feature>
<feature type="helix" evidence="14">
    <location>
        <begin position="287"/>
        <end position="294"/>
    </location>
</feature>
<feature type="helix" evidence="14">
    <location>
        <begin position="300"/>
        <end position="303"/>
    </location>
</feature>
<feature type="helix" evidence="14">
    <location>
        <begin position="308"/>
        <end position="314"/>
    </location>
</feature>
<feature type="helix" evidence="14">
    <location>
        <begin position="318"/>
        <end position="333"/>
    </location>
</feature>
<feature type="helix" evidence="14">
    <location>
        <begin position="337"/>
        <end position="342"/>
    </location>
</feature>
<feature type="helix" evidence="14">
    <location>
        <begin position="343"/>
        <end position="352"/>
    </location>
</feature>
<feature type="helix" evidence="14">
    <location>
        <begin position="358"/>
        <end position="366"/>
    </location>
</feature>
<feature type="strand" evidence="14">
    <location>
        <begin position="370"/>
        <end position="373"/>
    </location>
</feature>
<feature type="helix" evidence="14">
    <location>
        <begin position="375"/>
        <end position="383"/>
    </location>
</feature>
<feature type="helix" evidence="14">
    <location>
        <begin position="386"/>
        <end position="394"/>
    </location>
</feature>
<dbReference type="EMBL" id="L10840">
    <property type="status" value="NOT_ANNOTATED_CDS"/>
    <property type="molecule type" value="Genomic_DNA"/>
</dbReference>
<dbReference type="EMBL" id="Z71255">
    <property type="protein sequence ID" value="CAA94989.1"/>
    <property type="molecule type" value="Genomic_DNA"/>
</dbReference>
<dbReference type="EMBL" id="Z68111">
    <property type="protein sequence ID" value="CAA92145.1"/>
    <property type="molecule type" value="Genomic_DNA"/>
</dbReference>
<dbReference type="EMBL" id="Z73616">
    <property type="protein sequence ID" value="CAA97991.1"/>
    <property type="molecule type" value="Genomic_DNA"/>
</dbReference>
<dbReference type="EMBL" id="BK006949">
    <property type="protein sequence ID" value="DAA11466.1"/>
    <property type="molecule type" value="Genomic_DNA"/>
</dbReference>
<dbReference type="PIR" id="A46699">
    <property type="entry name" value="A46699"/>
</dbReference>
<dbReference type="RefSeq" id="NP_015366.1">
    <molecule id="P38431-1"/>
    <property type="nucleotide sequence ID" value="NM_001184138.1"/>
</dbReference>
<dbReference type="PDB" id="2FUL">
    <property type="method" value="X-ray"/>
    <property type="resolution" value="1.50 A"/>
    <property type="chains" value="A/B/C/D/E/F=241-405"/>
</dbReference>
<dbReference type="PDB" id="6FYX">
    <property type="method" value="EM"/>
    <property type="resolution" value="3.05 A"/>
    <property type="chains" value="m=1-405"/>
</dbReference>
<dbReference type="PDB" id="6FYY">
    <property type="method" value="EM"/>
    <property type="resolution" value="3.05 A"/>
    <property type="chains" value="m=1-405"/>
</dbReference>
<dbReference type="PDB" id="6ZU9">
    <property type="method" value="EM"/>
    <property type="resolution" value="6.20 A"/>
    <property type="chains" value="m=1-405"/>
</dbReference>
<dbReference type="PDB" id="8CAS">
    <property type="method" value="EM"/>
    <property type="resolution" value="3.30 A"/>
    <property type="chains" value="m=1-405"/>
</dbReference>
<dbReference type="PDB" id="8S8J">
    <property type="method" value="EM"/>
    <property type="resolution" value="4.70 A"/>
    <property type="chains" value="m=1-405"/>
</dbReference>
<dbReference type="PDBsum" id="2FUL"/>
<dbReference type="PDBsum" id="6FYX"/>
<dbReference type="PDBsum" id="6FYY"/>
<dbReference type="PDBsum" id="6ZU9"/>
<dbReference type="PDBsum" id="8CAS"/>
<dbReference type="PDBsum" id="8S8J"/>
<dbReference type="EMDB" id="EMD-11439"/>
<dbReference type="EMDB" id="EMD-19807"/>
<dbReference type="EMDB" id="EMD-4327"/>
<dbReference type="EMDB" id="EMD-4328"/>
<dbReference type="SMR" id="P38431"/>
<dbReference type="BioGRID" id="36218">
    <property type="interactions" value="124"/>
</dbReference>
<dbReference type="DIP" id="DIP-2303N"/>
<dbReference type="FunCoup" id="P38431">
    <property type="interactions" value="1459"/>
</dbReference>
<dbReference type="IntAct" id="P38431">
    <property type="interactions" value="45"/>
</dbReference>
<dbReference type="MINT" id="P38431"/>
<dbReference type="STRING" id="4932.YPR041W"/>
<dbReference type="iPTMnet" id="P38431"/>
<dbReference type="PaxDb" id="4932-YPR041W"/>
<dbReference type="PeptideAtlas" id="P38431"/>
<dbReference type="EnsemblFungi" id="YPR041W_mRNA">
    <molecule id="P38431-1"/>
    <property type="protein sequence ID" value="YPR041W"/>
    <property type="gene ID" value="YPR041W"/>
</dbReference>
<dbReference type="GeneID" id="856154"/>
<dbReference type="KEGG" id="sce:YPR041W"/>
<dbReference type="AGR" id="SGD:S000006245"/>
<dbReference type="SGD" id="S000006245">
    <property type="gene designation" value="TIF5"/>
</dbReference>
<dbReference type="VEuPathDB" id="FungiDB:YPR041W"/>
<dbReference type="eggNOG" id="KOG2767">
    <property type="taxonomic scope" value="Eukaryota"/>
</dbReference>
<dbReference type="GeneTree" id="ENSGT00390000016478"/>
<dbReference type="HOGENOM" id="CLU_026663_1_0_1"/>
<dbReference type="InParanoid" id="P38431"/>
<dbReference type="OMA" id="YRYKMEK"/>
<dbReference type="OrthoDB" id="10250831at2759"/>
<dbReference type="BioCyc" id="YEAST:G3O-34197-MONOMER"/>
<dbReference type="Reactome" id="R-SCE-72702">
    <property type="pathway name" value="Ribosomal scanning and start codon recognition"/>
</dbReference>
<dbReference type="BioGRID-ORCS" id="856154">
    <property type="hits" value="6 hits in 10 CRISPR screens"/>
</dbReference>
<dbReference type="CD-CODE" id="E03F929F">
    <property type="entry name" value="Stress granule"/>
</dbReference>
<dbReference type="EvolutionaryTrace" id="P38431"/>
<dbReference type="PRO" id="PR:P38431"/>
<dbReference type="Proteomes" id="UP000002311">
    <property type="component" value="Chromosome XVI"/>
</dbReference>
<dbReference type="RNAct" id="P38431">
    <property type="molecule type" value="protein"/>
</dbReference>
<dbReference type="GO" id="GO:0005829">
    <property type="term" value="C:cytosol"/>
    <property type="evidence" value="ECO:0000318"/>
    <property type="project" value="GO_Central"/>
</dbReference>
<dbReference type="GO" id="GO:0033290">
    <property type="term" value="C:eukaryotic 48S preinitiation complex"/>
    <property type="evidence" value="ECO:0000314"/>
    <property type="project" value="SGD"/>
</dbReference>
<dbReference type="GO" id="GO:0043614">
    <property type="term" value="C:multi-eIF complex"/>
    <property type="evidence" value="ECO:0000314"/>
    <property type="project" value="SGD"/>
</dbReference>
<dbReference type="GO" id="GO:0071074">
    <property type="term" value="F:eukaryotic initiation factor eIF2 binding"/>
    <property type="evidence" value="ECO:0000318"/>
    <property type="project" value="GO_Central"/>
</dbReference>
<dbReference type="GO" id="GO:0005092">
    <property type="term" value="F:GDP-dissociation inhibitor activity"/>
    <property type="evidence" value="ECO:0000314"/>
    <property type="project" value="SGD"/>
</dbReference>
<dbReference type="GO" id="GO:0005525">
    <property type="term" value="F:GTP binding"/>
    <property type="evidence" value="ECO:0007669"/>
    <property type="project" value="UniProtKB-KW"/>
</dbReference>
<dbReference type="GO" id="GO:0005096">
    <property type="term" value="F:GTPase activator activity"/>
    <property type="evidence" value="ECO:0000314"/>
    <property type="project" value="SGD"/>
</dbReference>
<dbReference type="GO" id="GO:0003743">
    <property type="term" value="F:translation initiation factor activity"/>
    <property type="evidence" value="ECO:0000314"/>
    <property type="project" value="SGD"/>
</dbReference>
<dbReference type="GO" id="GO:0031369">
    <property type="term" value="F:translation initiation factor binding"/>
    <property type="evidence" value="ECO:0000314"/>
    <property type="project" value="SGD"/>
</dbReference>
<dbReference type="GO" id="GO:0042256">
    <property type="term" value="P:cytosolic ribosome assembly"/>
    <property type="evidence" value="ECO:0000315"/>
    <property type="project" value="SGD"/>
</dbReference>
<dbReference type="GO" id="GO:0001732">
    <property type="term" value="P:formation of cytoplasmic translation initiation complex"/>
    <property type="evidence" value="ECO:0000314"/>
    <property type="project" value="SGD"/>
</dbReference>
<dbReference type="GO" id="GO:0045947">
    <property type="term" value="P:negative regulation of translational initiation"/>
    <property type="evidence" value="ECO:0000315"/>
    <property type="project" value="SGD"/>
</dbReference>
<dbReference type="GO" id="GO:0006446">
    <property type="term" value="P:regulation of translational initiation"/>
    <property type="evidence" value="ECO:0000314"/>
    <property type="project" value="SGD"/>
</dbReference>
<dbReference type="CDD" id="cd11561">
    <property type="entry name" value="W2_eIF5"/>
    <property type="match status" value="1"/>
</dbReference>
<dbReference type="FunFam" id="1.25.40.180:FF:000031">
    <property type="entry name" value="Eukaryotic translation initiation factor 5"/>
    <property type="match status" value="1"/>
</dbReference>
<dbReference type="FunFam" id="2.20.25.350:FF:000001">
    <property type="entry name" value="Eukaryotic translation initiation factor 5"/>
    <property type="match status" value="1"/>
</dbReference>
<dbReference type="FunFam" id="3.30.30.170:FF:000002">
    <property type="entry name" value="Eukaryotic translation initiation factor 5"/>
    <property type="match status" value="1"/>
</dbReference>
<dbReference type="Gene3D" id="1.25.40.180">
    <property type="match status" value="1"/>
</dbReference>
<dbReference type="Gene3D" id="2.20.25.350">
    <property type="match status" value="1"/>
</dbReference>
<dbReference type="Gene3D" id="3.30.30.170">
    <property type="match status" value="1"/>
</dbReference>
<dbReference type="InterPro" id="IPR016024">
    <property type="entry name" value="ARM-type_fold"/>
</dbReference>
<dbReference type="InterPro" id="IPR045196">
    <property type="entry name" value="IF2/IF5"/>
</dbReference>
<dbReference type="InterPro" id="IPR002735">
    <property type="entry name" value="Transl_init_fac_IF2/IF5_dom"/>
</dbReference>
<dbReference type="InterPro" id="IPR016189">
    <property type="entry name" value="Transl_init_fac_IF2/IF5_N"/>
</dbReference>
<dbReference type="InterPro" id="IPR016190">
    <property type="entry name" value="Transl_init_fac_IF2/IF5_Zn-bd"/>
</dbReference>
<dbReference type="InterPro" id="IPR003307">
    <property type="entry name" value="W2_domain"/>
</dbReference>
<dbReference type="PANTHER" id="PTHR23001">
    <property type="entry name" value="EUKARYOTIC TRANSLATION INITIATION FACTOR"/>
    <property type="match status" value="1"/>
</dbReference>
<dbReference type="PANTHER" id="PTHR23001:SF7">
    <property type="entry name" value="EUKARYOTIC TRANSLATION INITIATION FACTOR 5"/>
    <property type="match status" value="1"/>
</dbReference>
<dbReference type="Pfam" id="PF01873">
    <property type="entry name" value="eIF-5_eIF-2B"/>
    <property type="match status" value="1"/>
</dbReference>
<dbReference type="Pfam" id="PF02020">
    <property type="entry name" value="W2"/>
    <property type="match status" value="1"/>
</dbReference>
<dbReference type="SMART" id="SM00653">
    <property type="entry name" value="eIF2B_5"/>
    <property type="match status" value="1"/>
</dbReference>
<dbReference type="SMART" id="SM00515">
    <property type="entry name" value="eIF5C"/>
    <property type="match status" value="1"/>
</dbReference>
<dbReference type="SUPFAM" id="SSF48371">
    <property type="entry name" value="ARM repeat"/>
    <property type="match status" value="1"/>
</dbReference>
<dbReference type="SUPFAM" id="SSF100966">
    <property type="entry name" value="Translation initiation factor 2 beta, aIF2beta, N-terminal domain"/>
    <property type="match status" value="1"/>
</dbReference>
<dbReference type="SUPFAM" id="SSF75689">
    <property type="entry name" value="Zinc-binding domain of translation initiation factor 2 beta"/>
    <property type="match status" value="1"/>
</dbReference>
<dbReference type="PROSITE" id="PS51363">
    <property type="entry name" value="W2"/>
    <property type="match status" value="1"/>
</dbReference>
<reference key="1">
    <citation type="journal article" date="1993" name="J. Biol. Chem.">
        <title>Eukaryotic translation initiation factor 5 from Saccharomyces cerevisiae. Cloning, characterization, and expression of the gene encoding the 45,346-Da protein.</title>
        <authorList>
            <person name="Chakravarti D."/>
            <person name="Maitra U."/>
        </authorList>
    </citation>
    <scope>NUCLEOTIDE SEQUENCE [GENOMIC DNA]</scope>
    <scope>PROTEIN SEQUENCE OF 19-30; 326-340 AND 363-377</scope>
    <scope>SUBUNIT</scope>
    <source>
        <strain>ATCC 26109 / X2180</strain>
    </source>
</reference>
<reference key="2">
    <citation type="journal article" date="1998" name="Yeast">
        <title>Functional analysis of three adjacent open reading frames from the right arm of yeast chromosome XVI.</title>
        <authorList>
            <person name="Waskiewicz-Staniorowska B."/>
            <person name="Skala J."/>
            <person name="Jasinski M."/>
            <person name="Grenson M."/>
            <person name="Goffeau A."/>
            <person name="Ulaszewski S."/>
        </authorList>
    </citation>
    <scope>NUCLEOTIDE SEQUENCE [GENOMIC DNA]</scope>
    <source>
        <strain>ATCC 46191 / IL125-2B</strain>
    </source>
</reference>
<reference key="3">
    <citation type="journal article" date="1997" name="Nature">
        <title>The nucleotide sequence of Saccharomyces cerevisiae chromosome XVI.</title>
        <authorList>
            <person name="Bussey H."/>
            <person name="Storms R.K."/>
            <person name="Ahmed A."/>
            <person name="Albermann K."/>
            <person name="Allen E."/>
            <person name="Ansorge W."/>
            <person name="Araujo R."/>
            <person name="Aparicio A."/>
            <person name="Barrell B.G."/>
            <person name="Badcock K."/>
            <person name="Benes V."/>
            <person name="Botstein D."/>
            <person name="Bowman S."/>
            <person name="Brueckner M."/>
            <person name="Carpenter J."/>
            <person name="Cherry J.M."/>
            <person name="Chung E."/>
            <person name="Churcher C.M."/>
            <person name="Coster F."/>
            <person name="Davis K."/>
            <person name="Davis R.W."/>
            <person name="Dietrich F.S."/>
            <person name="Delius H."/>
            <person name="DiPaolo T."/>
            <person name="Dubois E."/>
            <person name="Duesterhoeft A."/>
            <person name="Duncan M."/>
            <person name="Floeth M."/>
            <person name="Fortin N."/>
            <person name="Friesen J.D."/>
            <person name="Fritz C."/>
            <person name="Goffeau A."/>
            <person name="Hall J."/>
            <person name="Hebling U."/>
            <person name="Heumann K."/>
            <person name="Hilbert H."/>
            <person name="Hillier L.W."/>
            <person name="Hunicke-Smith S."/>
            <person name="Hyman R.W."/>
            <person name="Johnston M."/>
            <person name="Kalman S."/>
            <person name="Kleine K."/>
            <person name="Komp C."/>
            <person name="Kurdi O."/>
            <person name="Lashkari D."/>
            <person name="Lew H."/>
            <person name="Lin A."/>
            <person name="Lin D."/>
            <person name="Louis E.J."/>
            <person name="Marathe R."/>
            <person name="Messenguy F."/>
            <person name="Mewes H.-W."/>
            <person name="Mirtipati S."/>
            <person name="Moestl D."/>
            <person name="Mueller-Auer S."/>
            <person name="Namath A."/>
            <person name="Nentwich U."/>
            <person name="Oefner P."/>
            <person name="Pearson D."/>
            <person name="Petel F.X."/>
            <person name="Pohl T.M."/>
            <person name="Purnelle B."/>
            <person name="Rajandream M.A."/>
            <person name="Rechmann S."/>
            <person name="Rieger M."/>
            <person name="Riles L."/>
            <person name="Roberts D."/>
            <person name="Schaefer M."/>
            <person name="Scharfe M."/>
            <person name="Scherens B."/>
            <person name="Schramm S."/>
            <person name="Schroeder M."/>
            <person name="Sdicu A.-M."/>
            <person name="Tettelin H."/>
            <person name="Urrestarazu L.A."/>
            <person name="Ushinsky S."/>
            <person name="Vierendeels F."/>
            <person name="Vissers S."/>
            <person name="Voss H."/>
            <person name="Walsh S.V."/>
            <person name="Wambutt R."/>
            <person name="Wang Y."/>
            <person name="Wedler E."/>
            <person name="Wedler H."/>
            <person name="Winnett E."/>
            <person name="Zhong W.-W."/>
            <person name="Zollner A."/>
            <person name="Vo D.H."/>
            <person name="Hani J."/>
        </authorList>
    </citation>
    <scope>NUCLEOTIDE SEQUENCE [LARGE SCALE GENOMIC DNA]</scope>
    <source>
        <strain>ATCC 204508 / S288c</strain>
    </source>
</reference>
<reference key="4">
    <citation type="journal article" date="2014" name="G3 (Bethesda)">
        <title>The reference genome sequence of Saccharomyces cerevisiae: Then and now.</title>
        <authorList>
            <person name="Engel S.R."/>
            <person name="Dietrich F.S."/>
            <person name="Fisk D.G."/>
            <person name="Binkley G."/>
            <person name="Balakrishnan R."/>
            <person name="Costanzo M.C."/>
            <person name="Dwight S.S."/>
            <person name="Hitz B.C."/>
            <person name="Karra K."/>
            <person name="Nash R.S."/>
            <person name="Weng S."/>
            <person name="Wong E.D."/>
            <person name="Lloyd P."/>
            <person name="Skrzypek M.S."/>
            <person name="Miyasato S.R."/>
            <person name="Simison M."/>
            <person name="Cherry J.M."/>
        </authorList>
    </citation>
    <scope>GENOME REANNOTATION</scope>
    <source>
        <strain>ATCC 204508 / S288c</strain>
    </source>
</reference>
<reference key="5">
    <citation type="journal article" date="1998" name="Mol. Cell. Biol.">
        <title>Identification of a translation initiation factor 3 (eIF3) core complex, conserved in yeast and mammals, that interacts with eIF5.</title>
        <authorList>
            <person name="Phan L."/>
            <person name="Zhang X."/>
            <person name="Asano K."/>
            <person name="Anderson J."/>
            <person name="Vornlocher H.-P."/>
            <person name="Greenberg J.R."/>
            <person name="Qin J."/>
            <person name="Hinnebusch A.G."/>
        </authorList>
    </citation>
    <scope>INTERACTION WITH NIP1</scope>
</reference>
<reference key="6">
    <citation type="journal article" date="1999" name="EMBO J.">
        <title>Conserved bipartite motifs in yeast eIF5 and eIF2Bepsilon, GTPase-activating and GDP-GTP exchange factors in translation initiation, mediate binding to their common substrate eIF2.</title>
        <authorList>
            <person name="Asano K."/>
            <person name="Krishnamoorthy T."/>
            <person name="Phan L."/>
            <person name="Pavitt G.D."/>
            <person name="Hinnebusch A.G."/>
        </authorList>
    </citation>
    <scope>INTERACTION WITH SUI3 AND NIP1</scope>
    <scope>MUTAGENESIS OF 342-LYS--PHE-364 AND 388-PHE--ASP-398</scope>
</reference>
<reference key="7">
    <citation type="journal article" date="1999" name="EMBO J.">
        <authorList>
            <person name="Asano K."/>
            <person name="Krishnamoorthy T."/>
            <person name="Phan L."/>
            <person name="Pavitt G.D."/>
            <person name="Hinnebusch A.G."/>
        </authorList>
    </citation>
    <scope>ERRATUM OF PUBMED:10075937</scope>
</reference>
<reference key="8">
    <citation type="journal article" date="2003" name="Genes Dev.">
        <title>The yeast eIF3 subunits TIF32/a, NIP1/c, and eIF5 make critical connections with the 40S ribosome in vivo.</title>
        <authorList>
            <person name="Valasek L."/>
            <person name="Mathew A.A."/>
            <person name="Shin B.-S."/>
            <person name="Nielsen K.H."/>
            <person name="Szamecz B."/>
            <person name="Hinnebusch A.G."/>
        </authorList>
    </citation>
    <scope>FUNCTION</scope>
    <scope>ASSOCIATION WITH THE 40S RIBOSOME</scope>
</reference>
<reference key="9">
    <citation type="journal article" date="2003" name="Nature">
        <title>Global analysis of protein expression in yeast.</title>
        <authorList>
            <person name="Ghaemmaghami S."/>
            <person name="Huh W.-K."/>
            <person name="Bower K."/>
            <person name="Howson R.W."/>
            <person name="Belle A."/>
            <person name="Dephoure N."/>
            <person name="O'Shea E.K."/>
            <person name="Weissman J.S."/>
        </authorList>
    </citation>
    <scope>LEVEL OF PROTEIN EXPRESSION [LARGE SCALE ANALYSIS]</scope>
</reference>
<reference key="10">
    <citation type="journal article" date="2007" name="J. Proteome Res.">
        <title>Large-scale phosphorylation analysis of alpha-factor-arrested Saccharomyces cerevisiae.</title>
        <authorList>
            <person name="Li X."/>
            <person name="Gerber S.A."/>
            <person name="Rudner A.D."/>
            <person name="Beausoleil S.A."/>
            <person name="Haas W."/>
            <person name="Villen J."/>
            <person name="Elias J.E."/>
            <person name="Gygi S.P."/>
        </authorList>
    </citation>
    <scope>PHOSPHORYLATION [LARGE SCALE ANALYSIS] AT THR-191 AND SER-397</scope>
    <scope>IDENTIFICATION BY MASS SPECTROMETRY [LARGE SCALE ANALYSIS]</scope>
    <source>
        <strain>ADR376</strain>
    </source>
</reference>
<reference key="11">
    <citation type="journal article" date="2008" name="Mol. Cell. Proteomics">
        <title>A multidimensional chromatography technology for in-depth phosphoproteome analysis.</title>
        <authorList>
            <person name="Albuquerque C.P."/>
            <person name="Smolka M.B."/>
            <person name="Payne S.H."/>
            <person name="Bafna V."/>
            <person name="Eng J."/>
            <person name="Zhou H."/>
        </authorList>
    </citation>
    <scope>PHOSPHORYLATION [LARGE SCALE ANALYSIS] AT SER-228; THR-317 AND SER-397</scope>
    <scope>IDENTIFICATION BY MASS SPECTROMETRY [LARGE SCALE ANALYSIS]</scope>
</reference>
<reference key="12">
    <citation type="journal article" date="2009" name="Science">
        <title>Global analysis of Cdk1 substrate phosphorylation sites provides insights into evolution.</title>
        <authorList>
            <person name="Holt L.J."/>
            <person name="Tuch B.B."/>
            <person name="Villen J."/>
            <person name="Johnson A.D."/>
            <person name="Gygi S.P."/>
            <person name="Morgan D.O."/>
        </authorList>
    </citation>
    <scope>PHOSPHORYLATION [LARGE SCALE ANALYSIS] AT SER-170; SER-172; THR-191 AND SER-397</scope>
    <scope>IDENTIFICATION BY MASS SPECTROMETRY [LARGE SCALE ANALYSIS]</scope>
</reference>
<reference key="13">
    <citation type="journal article" date="2022" name="J. Biol. Chem.">
        <title>Stepwise assembly of the eukaryotic translation initiation factor 2 complex.</title>
        <authorList>
            <person name="Vanselow S."/>
            <person name="Neumann-Arnold L."/>
            <person name="Wojciech-Moock F."/>
            <person name="Seufert W."/>
        </authorList>
    </citation>
    <scope>INTERACTION WITH SUI3</scope>
</reference>
<proteinExistence type="evidence at protein level"/>
<comment type="function">
    <text evidence="5">Catalyzes the hydrolysis of GTP bound to the 40S ribosomal initiation complex (40S.mRNA.Met-tRNA[F].eIF-2.GTP) with the subsequent joining of a 60S ribosomal subunit resulting in the release of eIF-2 and the guanine nucleotide. The subsequent joining of a 60S ribosomal subunit results in the formation of a functional 80S initiation complex (80S.mRNA.Met-tRNA[F]). eIF-5 is essential for cell viability.</text>
</comment>
<comment type="subunit">
    <text evidence="4 7 8 9">Monomer (PubMed:8486705). The factors eIF-1, eIF-2, eIF-3, TIF5/eIF-5 and methionyl-tRNAi form a multifactor complex (MFC) that may bind to the 40S ribosome (PubMed:10075937, PubMed:9671501). TIF32, NIP1 and TIF5/eIF-5 comprise a minimal 40S-ribosome-binding unit (PubMed:10075937, PubMed:9671501). Interacts with NIP1 (PubMed:10075937, PubMed:9671501). Interacts with SUI3 (PubMed:10075937, PubMed:35031321).</text>
</comment>
<comment type="interaction">
    <interactant intactId="EBI-9038">
        <id>P38431</id>
    </interactant>
    <interactant intactId="EBI-8924">
        <id>P32481</id>
        <label>GCD11</label>
    </interactant>
    <organismsDiffer>false</organismsDiffer>
    <experiments>4</experiments>
</comment>
<comment type="interaction">
    <interactant intactId="EBI-9038">
        <id>P38431</id>
    </interactant>
    <interactant intactId="EBI-8965">
        <id>P32497</id>
        <label>NIP1</label>
    </interactant>
    <organismsDiffer>false</organismsDiffer>
    <experiments>6</experiments>
</comment>
<comment type="interaction">
    <interactant intactId="EBI-9038">
        <id>P38431</id>
    </interactant>
    <interactant intactId="EBI-8915">
        <id>P20459</id>
        <label>SUI2</label>
    </interactant>
    <organismsDiffer>false</organismsDiffer>
    <experiments>5</experiments>
</comment>
<comment type="alternative products">
    <event type="alternative initiation"/>
    <isoform>
        <id>P38431-1</id>
        <name>Long</name>
        <sequence type="displayed"/>
    </isoform>
    <isoform>
        <id>P38431-2</id>
        <name>Short</name>
        <sequence type="described" ref="VSP_018724"/>
    </isoform>
</comment>
<comment type="miscellaneous">
    <text evidence="6">Present with 48300 molecules/cell in log phase SD medium.</text>
</comment>
<comment type="miscellaneous">
    <molecule>Isoform Short</molecule>
    <text evidence="10">Produced by alternative initiation at Met-18 of isoform Long.</text>
</comment>
<comment type="similarity">
    <text evidence="10">Belongs to the eIF-2-beta/eIF-5 family.</text>
</comment>
<name>IF5_YEAST</name>
<sequence>MSINICRDNHDPFYRYKMPPIQAKVEGRGNGIKTAVLNVADISHALNRPAPYIVKYFGFELGAQTSISVDKDRYLVNGVHEPAKLQDVLDGFINKFVLCGSCKNPETEIIITKDNDLVRDCKACGKRTPMDLRHKLSSFILKNPPDSVSGSKKKKKAATASANVRGGGLSISDIAQGKSQNAPSDGTGSSTPQHHDEDEDELSRQIKAAASTLEDIEVKDDEWAVDMSEEAIRARAKELEVNSELTQLDEYGEWILEQAGEDKENLPSDVELYKKAAELDVLNDPKIGCVLAQCLFDEDIVNEIAEHNAFFTKILVTPEYEKNFMGGIERFLGLEHKDLIPLLPKILVQLYNNDIISEEEIMRFGTKSSKKFVPKEVSKKVRRAAKPFITWLETAESDDDEEDDE</sequence>
<accession>P38431</accession>
<accession>D6W450</accession>
<keyword id="KW-0002">3D-structure</keyword>
<keyword id="KW-0024">Alternative initiation</keyword>
<keyword id="KW-0903">Direct protein sequencing</keyword>
<keyword id="KW-0342">GTP-binding</keyword>
<keyword id="KW-0396">Initiation factor</keyword>
<keyword id="KW-0547">Nucleotide-binding</keyword>
<keyword id="KW-0597">Phosphoprotein</keyword>
<keyword id="KW-0648">Protein biosynthesis</keyword>
<keyword id="KW-1185">Reference proteome</keyword>
<organism>
    <name type="scientific">Saccharomyces cerevisiae (strain ATCC 204508 / S288c)</name>
    <name type="common">Baker's yeast</name>
    <dbReference type="NCBI Taxonomy" id="559292"/>
    <lineage>
        <taxon>Eukaryota</taxon>
        <taxon>Fungi</taxon>
        <taxon>Dikarya</taxon>
        <taxon>Ascomycota</taxon>
        <taxon>Saccharomycotina</taxon>
        <taxon>Saccharomycetes</taxon>
        <taxon>Saccharomycetales</taxon>
        <taxon>Saccharomycetaceae</taxon>
        <taxon>Saccharomyces</taxon>
    </lineage>
</organism>